<reference key="1">
    <citation type="journal article" date="1996" name="Science">
        <title>Complete genome sequence of the methanogenic archaeon, Methanococcus jannaschii.</title>
        <authorList>
            <person name="Bult C.J."/>
            <person name="White O."/>
            <person name="Olsen G.J."/>
            <person name="Zhou L."/>
            <person name="Fleischmann R.D."/>
            <person name="Sutton G.G."/>
            <person name="Blake J.A."/>
            <person name="FitzGerald L.M."/>
            <person name="Clayton R.A."/>
            <person name="Gocayne J.D."/>
            <person name="Kerlavage A.R."/>
            <person name="Dougherty B.A."/>
            <person name="Tomb J.-F."/>
            <person name="Adams M.D."/>
            <person name="Reich C.I."/>
            <person name="Overbeek R."/>
            <person name="Kirkness E.F."/>
            <person name="Weinstock K.G."/>
            <person name="Merrick J.M."/>
            <person name="Glodek A."/>
            <person name="Scott J.L."/>
            <person name="Geoghagen N.S.M."/>
            <person name="Weidman J.F."/>
            <person name="Fuhrmann J.L."/>
            <person name="Nguyen D."/>
            <person name="Utterback T.R."/>
            <person name="Kelley J.M."/>
            <person name="Peterson J.D."/>
            <person name="Sadow P.W."/>
            <person name="Hanna M.C."/>
            <person name="Cotton M.D."/>
            <person name="Roberts K.M."/>
            <person name="Hurst M.A."/>
            <person name="Kaine B.P."/>
            <person name="Borodovsky M."/>
            <person name="Klenk H.-P."/>
            <person name="Fraser C.M."/>
            <person name="Smith H.O."/>
            <person name="Woese C.R."/>
            <person name="Venter J.C."/>
        </authorList>
    </citation>
    <scope>NUCLEOTIDE SEQUENCE [LARGE SCALE GENOMIC DNA]</scope>
    <source>
        <strain>ATCC 43067 / DSM 2661 / JAL-1 / JCM 10045 / NBRC 100440</strain>
    </source>
</reference>
<reference key="2">
    <citation type="journal article" date="2010" name="Biochemistry">
        <title>Archaeal RibL: a new FAD synthetase that is air sensitive.</title>
        <authorList>
            <person name="Mashhadi Z."/>
            <person name="Xu H."/>
            <person name="Grochowski L.L."/>
            <person name="White R.H."/>
        </authorList>
    </citation>
    <scope>FUNCTION</scope>
    <scope>CATALYTIC ACTIVITY</scope>
    <scope>COFACTOR</scope>
    <scope>SUBSTRATE SPECIFICITY</scope>
    <scope>KINETIC PARAMETERS</scope>
    <scope>ACTIVITY REGULATION</scope>
    <scope>GENE NAME</scope>
    <scope>PATHWAY</scope>
    <scope>SUBUNIT</scope>
    <scope>MUTAGENESIS OF CYS-126 AND CYS-143</scope>
    <source>
        <strain>ATCC 43067 / DSM 2661 / JAL-1 / JCM 10045 / NBRC 100440</strain>
    </source>
</reference>
<evidence type="ECO:0000255" key="1">
    <source>
        <dbReference type="HAMAP-Rule" id="MF_02115"/>
    </source>
</evidence>
<evidence type="ECO:0000269" key="2">
    <source>
    </source>
</evidence>
<evidence type="ECO:0000305" key="3"/>
<feature type="chain" id="PRO_0000107202" description="FAD synthase">
    <location>
        <begin position="1"/>
        <end position="149"/>
    </location>
</feature>
<feature type="binding site" evidence="1">
    <location>
        <begin position="10"/>
        <end position="11"/>
    </location>
    <ligand>
        <name>ATP</name>
        <dbReference type="ChEBI" id="CHEBI:30616"/>
    </ligand>
</feature>
<feature type="binding site" evidence="1">
    <location>
        <begin position="15"/>
        <end position="18"/>
    </location>
    <ligand>
        <name>ATP</name>
        <dbReference type="ChEBI" id="CHEBI:30616"/>
    </ligand>
</feature>
<feature type="binding site" evidence="1">
    <location>
        <position position="95"/>
    </location>
    <ligand>
        <name>ATP</name>
        <dbReference type="ChEBI" id="CHEBI:30616"/>
    </ligand>
</feature>
<feature type="binding site" evidence="1">
    <location>
        <position position="123"/>
    </location>
    <ligand>
        <name>ATP</name>
        <dbReference type="ChEBI" id="CHEBI:30616"/>
    </ligand>
</feature>
<feature type="mutagenesis site" description="2-fold increase in activity with Mg(2+) but loss of activity with Co(2+) as cofactor." evidence="2">
    <original>C</original>
    <variation>S</variation>
    <location>
        <position position="126"/>
    </location>
</feature>
<feature type="mutagenesis site" description="Nearly no change in activity with Mg(2+) but loss of activity with Co(2+) as cofactor." evidence="2">
    <original>C</original>
    <variation>S</variation>
    <location>
        <position position="143"/>
    </location>
</feature>
<proteinExistence type="evidence at protein level"/>
<comment type="function">
    <text evidence="2">Catalyzes the transfer of the AMP portion of ATP to flavin mononucleotide (FMN) to produce flavin adenine dinucleotide (FAD) coenzyme. To a lesser extent, is also able to utilize other nucleotides such as CTP and GTP as substrates, producing the modified coenzymes, flavin cytosine dinucleotide (FCD) and flavin guanine dinucleotide (FGD), respectively. Does not catalyze the reverse reaction to produce FMN and ATP from FAD and PPi. Does not function as a glycerol-3-phosphate cytidylyltransferase, as previously annotated in the complete genome.</text>
</comment>
<comment type="catalytic activity">
    <reaction evidence="2">
        <text>FMN + ATP + H(+) = FAD + diphosphate</text>
        <dbReference type="Rhea" id="RHEA:17237"/>
        <dbReference type="ChEBI" id="CHEBI:15378"/>
        <dbReference type="ChEBI" id="CHEBI:30616"/>
        <dbReference type="ChEBI" id="CHEBI:33019"/>
        <dbReference type="ChEBI" id="CHEBI:57692"/>
        <dbReference type="ChEBI" id="CHEBI:58210"/>
        <dbReference type="EC" id="2.7.7.2"/>
    </reaction>
</comment>
<comment type="cofactor">
    <cofactor evidence="2">
        <name>Co(2+)</name>
        <dbReference type="ChEBI" id="CHEBI:48828"/>
    </cofactor>
    <text evidence="2">Divalent metal cations. The best activity is observed with Co(2+), where the activity is 4 and 2.5 times greater than that with Mg(2+) and Mn(2+), respectively.</text>
</comment>
<comment type="activity regulation">
    <text evidence="2">Is inhibited by the product PPi.</text>
</comment>
<comment type="biophysicochemical properties">
    <kinetics>
        <KM evidence="2">25 uM for ATP</KM>
        <KM evidence="2">63 uM for FMN</KM>
        <KM evidence="2">480 uM for CTP</KM>
        <Vmax evidence="2">14.0 nmol/min/mg enzyme with ATP and FMN as substrates</Vmax>
        <Vmax evidence="2">10.0 nmol/min/mg enzyme with CTP and FMN as substrates</Vmax>
    </kinetics>
</comment>
<comment type="pathway">
    <text evidence="2">Cofactor biosynthesis; FAD biosynthesis; FAD from FMN: step 1/1.</text>
</comment>
<comment type="subunit">
    <text evidence="2">Homodimer.</text>
</comment>
<comment type="miscellaneous">
    <text evidence="2">Alkylation of both Cys-126 and Cys-143 results in complete loss of enzymatic activity.</text>
</comment>
<comment type="similarity">
    <text evidence="3">Belongs to the archaeal FAD synthase family.</text>
</comment>
<protein>
    <recommendedName>
        <fullName evidence="1">FAD synthase</fullName>
        <ecNumber evidence="2">2.7.7.2</ecNumber>
    </recommendedName>
    <alternativeName>
        <fullName evidence="1">FMN adenylyltransferase</fullName>
    </alternativeName>
    <alternativeName>
        <fullName evidence="1">Flavin adenine dinucleotide synthase</fullName>
    </alternativeName>
</protein>
<sequence length="149" mass="17288">MKKRVVTAGTFDILHPGHYEILKFAKSLGDELIVIVARDETVKKLKGRKPIIPEEQRREMVEALKPVDKAILGSLKNKLEPILELKPDIIVLGPDQTTFDEETLKKELAKYNLYPEIVRFRGYKKCPFHSSFDIVKEIIRRFCNKEIKI</sequence>
<keyword id="KW-0067">ATP-binding</keyword>
<keyword id="KW-0274">FAD</keyword>
<keyword id="KW-0285">Flavoprotein</keyword>
<keyword id="KW-0288">FMN</keyword>
<keyword id="KW-0547">Nucleotide-binding</keyword>
<keyword id="KW-0548">Nucleotidyltransferase</keyword>
<keyword id="KW-1185">Reference proteome</keyword>
<keyword id="KW-0808">Transferase</keyword>
<organism>
    <name type="scientific">Methanocaldococcus jannaschii (strain ATCC 43067 / DSM 2661 / JAL-1 / JCM 10045 / NBRC 100440)</name>
    <name type="common">Methanococcus jannaschii</name>
    <dbReference type="NCBI Taxonomy" id="243232"/>
    <lineage>
        <taxon>Archaea</taxon>
        <taxon>Methanobacteriati</taxon>
        <taxon>Methanobacteriota</taxon>
        <taxon>Methanomada group</taxon>
        <taxon>Methanococci</taxon>
        <taxon>Methanococcales</taxon>
        <taxon>Methanocaldococcaceae</taxon>
        <taxon>Methanocaldococcus</taxon>
    </lineage>
</organism>
<gene>
    <name type="primary">ribL</name>
    <name type="ordered locus">MJ1179</name>
</gene>
<name>RIBL_METJA</name>
<dbReference type="EC" id="2.7.7.2" evidence="2"/>
<dbReference type="EMBL" id="L77117">
    <property type="protein sequence ID" value="AAB99182.1"/>
    <property type="molecule type" value="Genomic_DNA"/>
</dbReference>
<dbReference type="PIR" id="B64447">
    <property type="entry name" value="B64447"/>
</dbReference>
<dbReference type="RefSeq" id="WP_010870692.1">
    <property type="nucleotide sequence ID" value="NC_000909.1"/>
</dbReference>
<dbReference type="SMR" id="Q58579"/>
<dbReference type="FunCoup" id="Q58579">
    <property type="interactions" value="12"/>
</dbReference>
<dbReference type="STRING" id="243232.MJ_1179"/>
<dbReference type="PaxDb" id="243232-MJ_1179"/>
<dbReference type="EnsemblBacteria" id="AAB99182">
    <property type="protein sequence ID" value="AAB99182"/>
    <property type="gene ID" value="MJ_1179"/>
</dbReference>
<dbReference type="GeneID" id="1452077"/>
<dbReference type="KEGG" id="mja:MJ_1179"/>
<dbReference type="eggNOG" id="arCOG01222">
    <property type="taxonomic scope" value="Archaea"/>
</dbReference>
<dbReference type="HOGENOM" id="CLU_034585_2_1_2"/>
<dbReference type="InParanoid" id="Q58579"/>
<dbReference type="OrthoDB" id="1912at2157"/>
<dbReference type="PhylomeDB" id="Q58579"/>
<dbReference type="BioCyc" id="MetaCyc:MONOMER-16487"/>
<dbReference type="BRENDA" id="2.7.7.2">
    <property type="organism ID" value="3260"/>
</dbReference>
<dbReference type="SABIO-RK" id="Q58579"/>
<dbReference type="UniPathway" id="UPA00277">
    <property type="reaction ID" value="UER00407"/>
</dbReference>
<dbReference type="Proteomes" id="UP000000805">
    <property type="component" value="Chromosome"/>
</dbReference>
<dbReference type="GO" id="GO:0005524">
    <property type="term" value="F:ATP binding"/>
    <property type="evidence" value="ECO:0000314"/>
    <property type="project" value="UniProtKB"/>
</dbReference>
<dbReference type="GO" id="GO:0002135">
    <property type="term" value="F:CTP binding"/>
    <property type="evidence" value="ECO:0000314"/>
    <property type="project" value="UniProtKB"/>
</dbReference>
<dbReference type="GO" id="GO:0003919">
    <property type="term" value="F:FMN adenylyltransferase activity"/>
    <property type="evidence" value="ECO:0000314"/>
    <property type="project" value="UniProtKB"/>
</dbReference>
<dbReference type="GO" id="GO:0010181">
    <property type="term" value="F:FMN binding"/>
    <property type="evidence" value="ECO:0000314"/>
    <property type="project" value="UniProtKB"/>
</dbReference>
<dbReference type="GO" id="GO:0042803">
    <property type="term" value="F:protein homodimerization activity"/>
    <property type="evidence" value="ECO:0000314"/>
    <property type="project" value="UniProtKB"/>
</dbReference>
<dbReference type="GO" id="GO:0006747">
    <property type="term" value="P:FAD biosynthetic process"/>
    <property type="evidence" value="ECO:0000314"/>
    <property type="project" value="UniProtKB"/>
</dbReference>
<dbReference type="GO" id="GO:0046444">
    <property type="term" value="P:FMN metabolic process"/>
    <property type="evidence" value="ECO:0000314"/>
    <property type="project" value="UniProtKB"/>
</dbReference>
<dbReference type="CDD" id="cd02170">
    <property type="entry name" value="cytidylyltransferase"/>
    <property type="match status" value="1"/>
</dbReference>
<dbReference type="Gene3D" id="3.40.50.620">
    <property type="entry name" value="HUPs"/>
    <property type="match status" value="1"/>
</dbReference>
<dbReference type="HAMAP" id="MF_02115">
    <property type="entry name" value="FAD_synth_arch"/>
    <property type="match status" value="1"/>
</dbReference>
<dbReference type="InterPro" id="IPR050385">
    <property type="entry name" value="Archaeal_FAD_synthase"/>
</dbReference>
<dbReference type="InterPro" id="IPR004821">
    <property type="entry name" value="Cyt_trans-like"/>
</dbReference>
<dbReference type="InterPro" id="IPR024902">
    <property type="entry name" value="FAD_synth_RibL"/>
</dbReference>
<dbReference type="InterPro" id="IPR014729">
    <property type="entry name" value="Rossmann-like_a/b/a_fold"/>
</dbReference>
<dbReference type="NCBIfam" id="TIGR00125">
    <property type="entry name" value="cyt_tran_rel"/>
    <property type="match status" value="1"/>
</dbReference>
<dbReference type="PANTHER" id="PTHR43793">
    <property type="entry name" value="FAD SYNTHASE"/>
    <property type="match status" value="1"/>
</dbReference>
<dbReference type="PANTHER" id="PTHR43793:SF1">
    <property type="entry name" value="FAD SYNTHASE"/>
    <property type="match status" value="1"/>
</dbReference>
<dbReference type="Pfam" id="PF01467">
    <property type="entry name" value="CTP_transf_like"/>
    <property type="match status" value="1"/>
</dbReference>
<dbReference type="SUPFAM" id="SSF52374">
    <property type="entry name" value="Nucleotidylyl transferase"/>
    <property type="match status" value="1"/>
</dbReference>
<accession>Q58579</accession>